<feature type="chain" id="PRO_0000200684" description="Protein FixC">
    <location>
        <begin position="1"/>
        <end position="435"/>
    </location>
</feature>
<feature type="sequence conflict" description="In Ref. 1; CAA39093." evidence="1" ref="1">
    <original>DAPLER</original>
    <variation>TRRWSA</variation>
    <location>
        <begin position="65"/>
        <end position="70"/>
    </location>
</feature>
<feature type="sequence conflict" description="In Ref. 1; CAA39093." evidence="1" ref="1">
    <original>TL</original>
    <variation>SV</variation>
    <location>
        <begin position="410"/>
        <end position="411"/>
    </location>
</feature>
<keyword id="KW-0274">FAD</keyword>
<keyword id="KW-0285">Flavoprotein</keyword>
<keyword id="KW-0535">Nitrogen fixation</keyword>
<keyword id="KW-0560">Oxidoreductase</keyword>
<keyword id="KW-1185">Reference proteome</keyword>
<accession>P26484</accession>
<accession>A8IIU0</accession>
<proteinExistence type="inferred from homology"/>
<gene>
    <name type="primary">fixC</name>
    <name type="ordered locus">AZC_3449</name>
</gene>
<protein>
    <recommendedName>
        <fullName>Protein FixC</fullName>
    </recommendedName>
</protein>
<sequence>MIDEKFDAIVVGAGMAGNAATLTLARRGLKVLQLERGEYSGSKNVQGAILYADMLEKLVPDFREDAPLERHLVEQRFWMLDDRSHVGLHYRSEDFNEEKPNRYTIIRAQFDKWFSSKVKEAGATVLCETTVTELVQDAYGKVIGVKTDRSGGQIHADVVVLAEGVNGLLGTKAHLRERPKPEHVALAVKEMHFLPRETIEARFNLQGDEGVVIEAAGTISRGMTGMGFIYANKECISLGIGCLVSDFQKTGETPYGLLERFKSHPSVAPLIEGSEVKEYAAHLIPEGGFKAIPQLFGDGWVVVGDAAQLNNAVHREGSNLAMTSGRIAAEAIFQVKSRREPMSAKNLSLYKTMLEESFVLKDMKKYKDLPALLHINSQNFFLTYPQLVSKAMQNFVRVDGTPKVEKEKRTLRAFVEARSWFGLFGDAFRFARAWR</sequence>
<reference key="1">
    <citation type="journal article" date="1991" name="Mol. Gen. Genet.">
        <title>Nucleotide sequence of the fixABC region of Azorhizobium caulinodans ORS571: similarity of the fixB product with eukaryotic flavoproteins, characterization of fixX, and identification of nifW.</title>
        <authorList>
            <person name="Arigoni F."/>
            <person name="Kaminski P.A."/>
            <person name="Hennecke H."/>
            <person name="Elmerich C."/>
        </authorList>
    </citation>
    <scope>NUCLEOTIDE SEQUENCE [GENOMIC DNA]</scope>
</reference>
<reference key="2">
    <citation type="submission" date="2007-04" db="EMBL/GenBank/DDBJ databases">
        <title>Complete genome sequence of the nitrogen-fixing bacterium Azorhizobium caulinodans ORS571.</title>
        <authorList>
            <person name="Lee K.B."/>
            <person name="Backer P.D."/>
            <person name="Aono T."/>
            <person name="Liu C.T."/>
            <person name="Suzuki S."/>
            <person name="Suzuki T."/>
            <person name="Kaneko T."/>
            <person name="Yamada M."/>
            <person name="Tabata S."/>
            <person name="Kupfer D.M."/>
            <person name="Najar F.Z."/>
            <person name="Wiley G.B."/>
            <person name="Roe B."/>
            <person name="Binnewies T."/>
            <person name="Ussery D."/>
            <person name="Vereecke D."/>
            <person name="Gevers D."/>
            <person name="Holsters M."/>
            <person name="Oyaizu H."/>
        </authorList>
    </citation>
    <scope>NUCLEOTIDE SEQUENCE [LARGE SCALE GENOMIC DNA]</scope>
    <source>
        <strain>ATCC 43989 / DSM 5975 / JCM 20966 / LMG 6465 / NBRC 14845 / NCIMB 13405 / ORS 571</strain>
    </source>
</reference>
<organism>
    <name type="scientific">Azorhizobium caulinodans (strain ATCC 43989 / DSM 5975 / JCM 20966 / LMG 6465 / NBRC 14845 / NCIMB 13405 / ORS 571)</name>
    <dbReference type="NCBI Taxonomy" id="438753"/>
    <lineage>
        <taxon>Bacteria</taxon>
        <taxon>Pseudomonadati</taxon>
        <taxon>Pseudomonadota</taxon>
        <taxon>Alphaproteobacteria</taxon>
        <taxon>Hyphomicrobiales</taxon>
        <taxon>Xanthobacteraceae</taxon>
        <taxon>Azorhizobium</taxon>
    </lineage>
</organism>
<evidence type="ECO:0000305" key="1"/>
<comment type="function">
    <text>Could be required for the formation of a functional nitrogenase Fe protein. Probably accepts electrons from FixA/FixB and reduces a quinone.</text>
</comment>
<comment type="cofactor">
    <cofactor evidence="1">
        <name>FAD</name>
        <dbReference type="ChEBI" id="CHEBI:57692"/>
    </cofactor>
</comment>
<comment type="similarity">
    <text evidence="1">Belongs to the ETF-QO/FixC family.</text>
</comment>
<dbReference type="EMBL" id="X55450">
    <property type="protein sequence ID" value="CAA39093.1"/>
    <property type="molecule type" value="Genomic_DNA"/>
</dbReference>
<dbReference type="EMBL" id="AP009384">
    <property type="protein sequence ID" value="BAF89447.1"/>
    <property type="molecule type" value="Genomic_DNA"/>
</dbReference>
<dbReference type="PIR" id="S14072">
    <property type="entry name" value="S14072"/>
</dbReference>
<dbReference type="RefSeq" id="WP_012171972.1">
    <property type="nucleotide sequence ID" value="NC_009937.1"/>
</dbReference>
<dbReference type="SMR" id="P26484"/>
<dbReference type="STRING" id="438753.AZC_3449"/>
<dbReference type="KEGG" id="azc:AZC_3449"/>
<dbReference type="eggNOG" id="COG0644">
    <property type="taxonomic scope" value="Bacteria"/>
</dbReference>
<dbReference type="HOGENOM" id="CLU_050977_0_0_5"/>
<dbReference type="Proteomes" id="UP000000270">
    <property type="component" value="Chromosome"/>
</dbReference>
<dbReference type="GO" id="GO:0016491">
    <property type="term" value="F:oxidoreductase activity"/>
    <property type="evidence" value="ECO:0007669"/>
    <property type="project" value="UniProtKB-KW"/>
</dbReference>
<dbReference type="GO" id="GO:0009399">
    <property type="term" value="P:nitrogen fixation"/>
    <property type="evidence" value="ECO:0007669"/>
    <property type="project" value="UniProtKB-KW"/>
</dbReference>
<dbReference type="Gene3D" id="3.50.50.60">
    <property type="entry name" value="FAD/NAD(P)-binding domain"/>
    <property type="match status" value="1"/>
</dbReference>
<dbReference type="InterPro" id="IPR036188">
    <property type="entry name" value="FAD/NAD-bd_sf"/>
</dbReference>
<dbReference type="InterPro" id="IPR039651">
    <property type="entry name" value="FixC-like"/>
</dbReference>
<dbReference type="PANTHER" id="PTHR43624">
    <property type="entry name" value="ELECTRON TRANSFER FLAVOPROTEIN-QUINONE OXIDOREDUCTASE YDIS-RELATED"/>
    <property type="match status" value="1"/>
</dbReference>
<dbReference type="PANTHER" id="PTHR43624:SF2">
    <property type="entry name" value="ELECTRON TRANSFER FLAVOPROTEIN-QUINONE OXIDOREDUCTASE YDIS-RELATED"/>
    <property type="match status" value="1"/>
</dbReference>
<dbReference type="Pfam" id="PF12831">
    <property type="entry name" value="FAD_oxidored"/>
    <property type="match status" value="1"/>
</dbReference>
<dbReference type="SUPFAM" id="SSF54373">
    <property type="entry name" value="FAD-linked reductases, C-terminal domain"/>
    <property type="match status" value="1"/>
</dbReference>
<dbReference type="SUPFAM" id="SSF51905">
    <property type="entry name" value="FAD/NAD(P)-binding domain"/>
    <property type="match status" value="1"/>
</dbReference>
<name>FIXC_AZOC5</name>